<protein>
    <recommendedName>
        <fullName>Uncharacterized protein RC0047</fullName>
    </recommendedName>
</protein>
<organism>
    <name type="scientific">Rickettsia conorii (strain ATCC VR-613 / Malish 7)</name>
    <dbReference type="NCBI Taxonomy" id="272944"/>
    <lineage>
        <taxon>Bacteria</taxon>
        <taxon>Pseudomonadati</taxon>
        <taxon>Pseudomonadota</taxon>
        <taxon>Alphaproteobacteria</taxon>
        <taxon>Rickettsiales</taxon>
        <taxon>Rickettsiaceae</taxon>
        <taxon>Rickettsieae</taxon>
        <taxon>Rickettsia</taxon>
        <taxon>spotted fever group</taxon>
    </lineage>
</organism>
<sequence length="59" mass="6554">MKARFIWADNYFENTTSSSTPKVGYNVGASLLTAHKRILSYLQRITVIYAANILATKGS</sequence>
<dbReference type="EMBL" id="AE006914">
    <property type="protein sequence ID" value="AAL02585.1"/>
    <property type="molecule type" value="Genomic_DNA"/>
</dbReference>
<dbReference type="PIR" id="G97705">
    <property type="entry name" value="G97705"/>
</dbReference>
<dbReference type="KEGG" id="rco:RC0047"/>
<dbReference type="PATRIC" id="fig|272944.4.peg.56"/>
<dbReference type="HOGENOM" id="CLU_2957734_0_0_5"/>
<dbReference type="Proteomes" id="UP000000816">
    <property type="component" value="Chromosome"/>
</dbReference>
<gene>
    <name type="ordered locus">RC0047</name>
</gene>
<accession>Q92JM0</accession>
<name>Y047_RICCN</name>
<reference key="1">
    <citation type="journal article" date="2001" name="Science">
        <title>Mechanisms of evolution in Rickettsia conorii and R. prowazekii.</title>
        <authorList>
            <person name="Ogata H."/>
            <person name="Audic S."/>
            <person name="Renesto-Audiffren P."/>
            <person name="Fournier P.-E."/>
            <person name="Barbe V."/>
            <person name="Samson D."/>
            <person name="Roux V."/>
            <person name="Cossart P."/>
            <person name="Weissenbach J."/>
            <person name="Claverie J.-M."/>
            <person name="Raoult D."/>
        </authorList>
    </citation>
    <scope>NUCLEOTIDE SEQUENCE [LARGE SCALE GENOMIC DNA]</scope>
    <source>
        <strain>ATCC VR-613 / Malish 7</strain>
    </source>
</reference>
<feature type="chain" id="PRO_0000101438" description="Uncharacterized protein RC0047">
    <location>
        <begin position="1"/>
        <end position="59"/>
    </location>
</feature>
<proteinExistence type="predicted"/>